<gene>
    <name evidence="1" type="primary">rplJ</name>
    <name type="ordered locus">Dtpsy_3248</name>
</gene>
<proteinExistence type="inferred from homology"/>
<feature type="chain" id="PRO_1000195544" description="Large ribosomal subunit protein uL10">
    <location>
        <begin position="1"/>
        <end position="168"/>
    </location>
</feature>
<sequence length="168" mass="17454">MSLNRSEKEAVINEVTSLAAKAQTLVIAEYRGITVADMTKLRVEARSKGVSLSVLKNTLARRAVAGSQFDVVADQMTGPLIYGFSEDAVAAAKVVADFAKTNDKLVIRGGAFAGKALDVNGVKQLANIPTKEVLLAQLCGLLMSPISRTAVVLGALAAKKGEGEPAAA</sequence>
<accession>B9MH49</accession>
<name>RL10_ACIET</name>
<protein>
    <recommendedName>
        <fullName evidence="1">Large ribosomal subunit protein uL10</fullName>
    </recommendedName>
    <alternativeName>
        <fullName evidence="2">50S ribosomal protein L10</fullName>
    </alternativeName>
</protein>
<dbReference type="EMBL" id="CP001392">
    <property type="protein sequence ID" value="ACM34677.1"/>
    <property type="molecule type" value="Genomic_DNA"/>
</dbReference>
<dbReference type="RefSeq" id="WP_011806986.1">
    <property type="nucleotide sequence ID" value="NC_011992.1"/>
</dbReference>
<dbReference type="SMR" id="B9MH49"/>
<dbReference type="GeneID" id="84683779"/>
<dbReference type="KEGG" id="dia:Dtpsy_3248"/>
<dbReference type="eggNOG" id="COG0244">
    <property type="taxonomic scope" value="Bacteria"/>
</dbReference>
<dbReference type="HOGENOM" id="CLU_092227_0_1_4"/>
<dbReference type="Proteomes" id="UP000000450">
    <property type="component" value="Chromosome"/>
</dbReference>
<dbReference type="GO" id="GO:0015934">
    <property type="term" value="C:large ribosomal subunit"/>
    <property type="evidence" value="ECO:0007669"/>
    <property type="project" value="InterPro"/>
</dbReference>
<dbReference type="GO" id="GO:0070180">
    <property type="term" value="F:large ribosomal subunit rRNA binding"/>
    <property type="evidence" value="ECO:0007669"/>
    <property type="project" value="UniProtKB-UniRule"/>
</dbReference>
<dbReference type="GO" id="GO:0003735">
    <property type="term" value="F:structural constituent of ribosome"/>
    <property type="evidence" value="ECO:0007669"/>
    <property type="project" value="InterPro"/>
</dbReference>
<dbReference type="GO" id="GO:0006412">
    <property type="term" value="P:translation"/>
    <property type="evidence" value="ECO:0007669"/>
    <property type="project" value="UniProtKB-UniRule"/>
</dbReference>
<dbReference type="CDD" id="cd05797">
    <property type="entry name" value="Ribosomal_L10"/>
    <property type="match status" value="1"/>
</dbReference>
<dbReference type="Gene3D" id="3.30.70.1730">
    <property type="match status" value="1"/>
</dbReference>
<dbReference type="Gene3D" id="6.10.250.290">
    <property type="match status" value="1"/>
</dbReference>
<dbReference type="HAMAP" id="MF_00362">
    <property type="entry name" value="Ribosomal_uL10"/>
    <property type="match status" value="1"/>
</dbReference>
<dbReference type="InterPro" id="IPR001790">
    <property type="entry name" value="Ribosomal_uL10"/>
</dbReference>
<dbReference type="InterPro" id="IPR043141">
    <property type="entry name" value="Ribosomal_uL10-like_sf"/>
</dbReference>
<dbReference type="InterPro" id="IPR022973">
    <property type="entry name" value="Ribosomal_uL10_bac"/>
</dbReference>
<dbReference type="InterPro" id="IPR047865">
    <property type="entry name" value="Ribosomal_uL10_bac_type"/>
</dbReference>
<dbReference type="InterPro" id="IPR002363">
    <property type="entry name" value="Ribosomal_uL10_CS_bac"/>
</dbReference>
<dbReference type="NCBIfam" id="NF000955">
    <property type="entry name" value="PRK00099.1-1"/>
    <property type="match status" value="1"/>
</dbReference>
<dbReference type="PANTHER" id="PTHR11560">
    <property type="entry name" value="39S RIBOSOMAL PROTEIN L10, MITOCHONDRIAL"/>
    <property type="match status" value="1"/>
</dbReference>
<dbReference type="Pfam" id="PF00466">
    <property type="entry name" value="Ribosomal_L10"/>
    <property type="match status" value="1"/>
</dbReference>
<dbReference type="SUPFAM" id="SSF160369">
    <property type="entry name" value="Ribosomal protein L10-like"/>
    <property type="match status" value="1"/>
</dbReference>
<dbReference type="PROSITE" id="PS01109">
    <property type="entry name" value="RIBOSOMAL_L10"/>
    <property type="match status" value="1"/>
</dbReference>
<keyword id="KW-1185">Reference proteome</keyword>
<keyword id="KW-0687">Ribonucleoprotein</keyword>
<keyword id="KW-0689">Ribosomal protein</keyword>
<keyword id="KW-0694">RNA-binding</keyword>
<keyword id="KW-0699">rRNA-binding</keyword>
<evidence type="ECO:0000255" key="1">
    <source>
        <dbReference type="HAMAP-Rule" id="MF_00362"/>
    </source>
</evidence>
<evidence type="ECO:0000305" key="2"/>
<organism>
    <name type="scientific">Acidovorax ebreus (strain TPSY)</name>
    <name type="common">Diaphorobacter sp. (strain TPSY)</name>
    <dbReference type="NCBI Taxonomy" id="535289"/>
    <lineage>
        <taxon>Bacteria</taxon>
        <taxon>Pseudomonadati</taxon>
        <taxon>Pseudomonadota</taxon>
        <taxon>Betaproteobacteria</taxon>
        <taxon>Burkholderiales</taxon>
        <taxon>Comamonadaceae</taxon>
        <taxon>Diaphorobacter</taxon>
    </lineage>
</organism>
<reference key="1">
    <citation type="submission" date="2009-01" db="EMBL/GenBank/DDBJ databases">
        <title>Complete sequence of Diaphorobacter sp. TPSY.</title>
        <authorList>
            <consortium name="US DOE Joint Genome Institute"/>
            <person name="Lucas S."/>
            <person name="Copeland A."/>
            <person name="Lapidus A."/>
            <person name="Glavina del Rio T."/>
            <person name="Tice H."/>
            <person name="Bruce D."/>
            <person name="Goodwin L."/>
            <person name="Pitluck S."/>
            <person name="Chertkov O."/>
            <person name="Brettin T."/>
            <person name="Detter J.C."/>
            <person name="Han C."/>
            <person name="Larimer F."/>
            <person name="Land M."/>
            <person name="Hauser L."/>
            <person name="Kyrpides N."/>
            <person name="Mikhailova N."/>
            <person name="Coates J.D."/>
        </authorList>
    </citation>
    <scope>NUCLEOTIDE SEQUENCE [LARGE SCALE GENOMIC DNA]</scope>
    <source>
        <strain>TPSY</strain>
    </source>
</reference>
<comment type="function">
    <text evidence="1">Forms part of the ribosomal stalk, playing a central role in the interaction of the ribosome with GTP-bound translation factors.</text>
</comment>
<comment type="subunit">
    <text evidence="1">Part of the ribosomal stalk of the 50S ribosomal subunit. The N-terminus interacts with L11 and the large rRNA to form the base of the stalk. The C-terminus forms an elongated spine to which L12 dimers bind in a sequential fashion forming a multimeric L10(L12)X complex.</text>
</comment>
<comment type="similarity">
    <text evidence="1">Belongs to the universal ribosomal protein uL10 family.</text>
</comment>